<organism>
    <name type="scientific">Staphylococcus epidermidis (strain ATCC 12228 / FDA PCI 1200)</name>
    <dbReference type="NCBI Taxonomy" id="176280"/>
    <lineage>
        <taxon>Bacteria</taxon>
        <taxon>Bacillati</taxon>
        <taxon>Bacillota</taxon>
        <taxon>Bacilli</taxon>
        <taxon>Bacillales</taxon>
        <taxon>Staphylococcaceae</taxon>
        <taxon>Staphylococcus</taxon>
    </lineage>
</organism>
<reference key="1">
    <citation type="journal article" date="2003" name="Mol. Microbiol.">
        <title>Genome-based analysis of virulence genes in a non-biofilm-forming Staphylococcus epidermidis strain (ATCC 12228).</title>
        <authorList>
            <person name="Zhang Y.-Q."/>
            <person name="Ren S.-X."/>
            <person name="Li H.-L."/>
            <person name="Wang Y.-X."/>
            <person name="Fu G."/>
            <person name="Yang J."/>
            <person name="Qin Z.-Q."/>
            <person name="Miao Y.-G."/>
            <person name="Wang W.-Y."/>
            <person name="Chen R.-S."/>
            <person name="Shen Y."/>
            <person name="Chen Z."/>
            <person name="Yuan Z.-H."/>
            <person name="Zhao G.-P."/>
            <person name="Qu D."/>
            <person name="Danchin A."/>
            <person name="Wen Y.-M."/>
        </authorList>
    </citation>
    <scope>NUCLEOTIDE SEQUENCE [LARGE SCALE GENOMIC DNA]</scope>
    <source>
        <strain>ATCC 12228 / FDA PCI 1200</strain>
    </source>
</reference>
<keyword id="KW-0963">Cytoplasm</keyword>
<keyword id="KW-0444">Lipid biosynthesis</keyword>
<keyword id="KW-0443">Lipid metabolism</keyword>
<keyword id="KW-0520">NAD</keyword>
<keyword id="KW-0521">NADP</keyword>
<keyword id="KW-0547">Nucleotide-binding</keyword>
<keyword id="KW-0560">Oxidoreductase</keyword>
<keyword id="KW-0594">Phospholipid biosynthesis</keyword>
<keyword id="KW-1208">Phospholipid metabolism</keyword>
<sequence>MRKITVFGMGSFGTALANVLAQNGHDVLMWGKNVENVDELNTHHMNKNYLKDAKLDSSIKATVDLNKAVQFSDIYLMALPTKAIREVSKDIDQLLTSKKTFIHVAKGIENDTFKRVSEMIEDSISSEHNGGIGVLSGPSHAEEVVIKQPTTVAASSKDNNVSKLIQDLFMNDYLRVYTNNDLVGVELGGALKNIIAIASGIVAGMGWGDNAKAALMTRGLAEISRLGEKLGADPMTFLGLGGIGDLIVTCTSTHSRNYTLGFKLGQGKTAEEALKEMKMVVEGIYTTKSVYHLAQQEGVEMPITNALYEVLFEDVPVSKSVRTLMERDKKAE</sequence>
<protein>
    <recommendedName>
        <fullName evidence="1">Glycerol-3-phosphate dehydrogenase [NAD(P)+]</fullName>
        <ecNumber evidence="1">1.1.1.94</ecNumber>
    </recommendedName>
    <alternativeName>
        <fullName evidence="1">NAD(P)(+)-dependent glycerol-3-phosphate dehydrogenase</fullName>
    </alternativeName>
    <alternativeName>
        <fullName evidence="1">NAD(P)H-dependent dihydroxyacetone-phosphate reductase</fullName>
    </alternativeName>
</protein>
<proteinExistence type="inferred from homology"/>
<evidence type="ECO:0000255" key="1">
    <source>
        <dbReference type="HAMAP-Rule" id="MF_00394"/>
    </source>
</evidence>
<evidence type="ECO:0000305" key="2"/>
<feature type="chain" id="PRO_0000138029" description="Glycerol-3-phosphate dehydrogenase [NAD(P)+]">
    <location>
        <begin position="1"/>
        <end position="332"/>
    </location>
</feature>
<feature type="active site" description="Proton acceptor" evidence="1">
    <location>
        <position position="192"/>
    </location>
</feature>
<feature type="binding site" evidence="1">
    <location>
        <position position="11"/>
    </location>
    <ligand>
        <name>NADPH</name>
        <dbReference type="ChEBI" id="CHEBI:57783"/>
    </ligand>
</feature>
<feature type="binding site" evidence="1">
    <location>
        <position position="12"/>
    </location>
    <ligand>
        <name>NADPH</name>
        <dbReference type="ChEBI" id="CHEBI:57783"/>
    </ligand>
</feature>
<feature type="binding site" evidence="1">
    <location>
        <position position="32"/>
    </location>
    <ligand>
        <name>NADPH</name>
        <dbReference type="ChEBI" id="CHEBI:57783"/>
    </ligand>
</feature>
<feature type="binding site" evidence="1">
    <location>
        <position position="106"/>
    </location>
    <ligand>
        <name>NADPH</name>
        <dbReference type="ChEBI" id="CHEBI:57783"/>
    </ligand>
</feature>
<feature type="binding site" evidence="1">
    <location>
        <position position="106"/>
    </location>
    <ligand>
        <name>sn-glycerol 3-phosphate</name>
        <dbReference type="ChEBI" id="CHEBI:57597"/>
    </ligand>
</feature>
<feature type="binding site" evidence="1">
    <location>
        <position position="137"/>
    </location>
    <ligand>
        <name>sn-glycerol 3-phosphate</name>
        <dbReference type="ChEBI" id="CHEBI:57597"/>
    </ligand>
</feature>
<feature type="binding site" evidence="1">
    <location>
        <position position="139"/>
    </location>
    <ligand>
        <name>sn-glycerol 3-phosphate</name>
        <dbReference type="ChEBI" id="CHEBI:57597"/>
    </ligand>
</feature>
<feature type="binding site" evidence="1">
    <location>
        <position position="141"/>
    </location>
    <ligand>
        <name>NADPH</name>
        <dbReference type="ChEBI" id="CHEBI:57783"/>
    </ligand>
</feature>
<feature type="binding site" evidence="1">
    <location>
        <position position="192"/>
    </location>
    <ligand>
        <name>sn-glycerol 3-phosphate</name>
        <dbReference type="ChEBI" id="CHEBI:57597"/>
    </ligand>
</feature>
<feature type="binding site" evidence="1">
    <location>
        <position position="245"/>
    </location>
    <ligand>
        <name>sn-glycerol 3-phosphate</name>
        <dbReference type="ChEBI" id="CHEBI:57597"/>
    </ligand>
</feature>
<feature type="binding site" evidence="1">
    <location>
        <position position="255"/>
    </location>
    <ligand>
        <name>sn-glycerol 3-phosphate</name>
        <dbReference type="ChEBI" id="CHEBI:57597"/>
    </ligand>
</feature>
<feature type="binding site" evidence="1">
    <location>
        <position position="256"/>
    </location>
    <ligand>
        <name>NADPH</name>
        <dbReference type="ChEBI" id="CHEBI:57783"/>
    </ligand>
</feature>
<feature type="binding site" evidence="1">
    <location>
        <position position="256"/>
    </location>
    <ligand>
        <name>sn-glycerol 3-phosphate</name>
        <dbReference type="ChEBI" id="CHEBI:57597"/>
    </ligand>
</feature>
<feature type="binding site" evidence="1">
    <location>
        <position position="257"/>
    </location>
    <ligand>
        <name>sn-glycerol 3-phosphate</name>
        <dbReference type="ChEBI" id="CHEBI:57597"/>
    </ligand>
</feature>
<feature type="binding site" evidence="1">
    <location>
        <position position="280"/>
    </location>
    <ligand>
        <name>NADPH</name>
        <dbReference type="ChEBI" id="CHEBI:57783"/>
    </ligand>
</feature>
<feature type="binding site" evidence="1">
    <location>
        <position position="282"/>
    </location>
    <ligand>
        <name>NADPH</name>
        <dbReference type="ChEBI" id="CHEBI:57783"/>
    </ligand>
</feature>
<name>GPDA_STAES</name>
<gene>
    <name evidence="1" type="primary">gpsA</name>
    <name type="ordered locus">SE_1162/SE_1161</name>
</gene>
<dbReference type="EC" id="1.1.1.94" evidence="1"/>
<dbReference type="EMBL" id="AE015929">
    <property type="protein sequence ID" value="AAO04759.1"/>
    <property type="status" value="ALT_FRAME"/>
    <property type="molecule type" value="Genomic_DNA"/>
</dbReference>
<dbReference type="EMBL" id="AE015929">
    <property type="protein sequence ID" value="AAO04758.1"/>
    <property type="status" value="ALT_FRAME"/>
    <property type="molecule type" value="Genomic_DNA"/>
</dbReference>
<dbReference type="RefSeq" id="NP_764716.1">
    <property type="nucleotide sequence ID" value="NC_004461.1"/>
</dbReference>
<dbReference type="RefSeq" id="NP_764717.1">
    <property type="nucleotide sequence ID" value="NC_004461.1"/>
</dbReference>
<dbReference type="SMR" id="Q8CP63"/>
<dbReference type="KEGG" id="sep:SE_1161"/>
<dbReference type="KEGG" id="sep:SE_1162"/>
<dbReference type="PATRIC" id="fig|176280.10.peg.1133"/>
<dbReference type="eggNOG" id="COG0240">
    <property type="taxonomic scope" value="Bacteria"/>
</dbReference>
<dbReference type="HOGENOM" id="CLU_033449_4_1_9"/>
<dbReference type="OrthoDB" id="9812273at2"/>
<dbReference type="UniPathway" id="UPA00940"/>
<dbReference type="Proteomes" id="UP000001411">
    <property type="component" value="Chromosome"/>
</dbReference>
<dbReference type="GO" id="GO:0005829">
    <property type="term" value="C:cytosol"/>
    <property type="evidence" value="ECO:0007669"/>
    <property type="project" value="TreeGrafter"/>
</dbReference>
<dbReference type="GO" id="GO:0047952">
    <property type="term" value="F:glycerol-3-phosphate dehydrogenase [NAD(P)+] activity"/>
    <property type="evidence" value="ECO:0007669"/>
    <property type="project" value="UniProtKB-UniRule"/>
</dbReference>
<dbReference type="GO" id="GO:0051287">
    <property type="term" value="F:NAD binding"/>
    <property type="evidence" value="ECO:0007669"/>
    <property type="project" value="InterPro"/>
</dbReference>
<dbReference type="GO" id="GO:0005975">
    <property type="term" value="P:carbohydrate metabolic process"/>
    <property type="evidence" value="ECO:0007669"/>
    <property type="project" value="InterPro"/>
</dbReference>
<dbReference type="GO" id="GO:0046167">
    <property type="term" value="P:glycerol-3-phosphate biosynthetic process"/>
    <property type="evidence" value="ECO:0007669"/>
    <property type="project" value="UniProtKB-UniRule"/>
</dbReference>
<dbReference type="GO" id="GO:0046168">
    <property type="term" value="P:glycerol-3-phosphate catabolic process"/>
    <property type="evidence" value="ECO:0007669"/>
    <property type="project" value="InterPro"/>
</dbReference>
<dbReference type="GO" id="GO:0006650">
    <property type="term" value="P:glycerophospholipid metabolic process"/>
    <property type="evidence" value="ECO:0007669"/>
    <property type="project" value="UniProtKB-UniRule"/>
</dbReference>
<dbReference type="GO" id="GO:0008654">
    <property type="term" value="P:phospholipid biosynthetic process"/>
    <property type="evidence" value="ECO:0007669"/>
    <property type="project" value="UniProtKB-KW"/>
</dbReference>
<dbReference type="FunFam" id="1.10.1040.10:FF:000001">
    <property type="entry name" value="Glycerol-3-phosphate dehydrogenase [NAD(P)+]"/>
    <property type="match status" value="1"/>
</dbReference>
<dbReference type="FunFam" id="3.40.50.720:FF:000019">
    <property type="entry name" value="Glycerol-3-phosphate dehydrogenase [NAD(P)+]"/>
    <property type="match status" value="1"/>
</dbReference>
<dbReference type="Gene3D" id="1.10.1040.10">
    <property type="entry name" value="N-(1-d-carboxylethyl)-l-norvaline Dehydrogenase, domain 2"/>
    <property type="match status" value="1"/>
</dbReference>
<dbReference type="Gene3D" id="3.40.50.720">
    <property type="entry name" value="NAD(P)-binding Rossmann-like Domain"/>
    <property type="match status" value="1"/>
</dbReference>
<dbReference type="HAMAP" id="MF_00394">
    <property type="entry name" value="NAD_Glyc3P_dehydrog"/>
    <property type="match status" value="1"/>
</dbReference>
<dbReference type="InterPro" id="IPR008927">
    <property type="entry name" value="6-PGluconate_DH-like_C_sf"/>
</dbReference>
<dbReference type="InterPro" id="IPR013328">
    <property type="entry name" value="6PGD_dom2"/>
</dbReference>
<dbReference type="InterPro" id="IPR006168">
    <property type="entry name" value="G3P_DH_NAD-dep"/>
</dbReference>
<dbReference type="InterPro" id="IPR006109">
    <property type="entry name" value="G3P_DH_NAD-dep_C"/>
</dbReference>
<dbReference type="InterPro" id="IPR011128">
    <property type="entry name" value="G3P_DH_NAD-dep_N"/>
</dbReference>
<dbReference type="InterPro" id="IPR036291">
    <property type="entry name" value="NAD(P)-bd_dom_sf"/>
</dbReference>
<dbReference type="NCBIfam" id="NF000940">
    <property type="entry name" value="PRK00094.1-2"/>
    <property type="match status" value="1"/>
</dbReference>
<dbReference type="NCBIfam" id="NF000941">
    <property type="entry name" value="PRK00094.1-3"/>
    <property type="match status" value="1"/>
</dbReference>
<dbReference type="NCBIfam" id="NF000942">
    <property type="entry name" value="PRK00094.1-4"/>
    <property type="match status" value="1"/>
</dbReference>
<dbReference type="PANTHER" id="PTHR11728">
    <property type="entry name" value="GLYCEROL-3-PHOSPHATE DEHYDROGENASE"/>
    <property type="match status" value="1"/>
</dbReference>
<dbReference type="PANTHER" id="PTHR11728:SF1">
    <property type="entry name" value="GLYCEROL-3-PHOSPHATE DEHYDROGENASE [NAD(+)] 2, CHLOROPLASTIC"/>
    <property type="match status" value="1"/>
</dbReference>
<dbReference type="Pfam" id="PF07479">
    <property type="entry name" value="NAD_Gly3P_dh_C"/>
    <property type="match status" value="1"/>
</dbReference>
<dbReference type="Pfam" id="PF01210">
    <property type="entry name" value="NAD_Gly3P_dh_N"/>
    <property type="match status" value="1"/>
</dbReference>
<dbReference type="PIRSF" id="PIRSF000114">
    <property type="entry name" value="Glycerol-3-P_dh"/>
    <property type="match status" value="1"/>
</dbReference>
<dbReference type="PRINTS" id="PR00077">
    <property type="entry name" value="GPDHDRGNASE"/>
</dbReference>
<dbReference type="SUPFAM" id="SSF48179">
    <property type="entry name" value="6-phosphogluconate dehydrogenase C-terminal domain-like"/>
    <property type="match status" value="1"/>
</dbReference>
<dbReference type="SUPFAM" id="SSF51735">
    <property type="entry name" value="NAD(P)-binding Rossmann-fold domains"/>
    <property type="match status" value="1"/>
</dbReference>
<dbReference type="PROSITE" id="PS00957">
    <property type="entry name" value="NAD_G3PDH"/>
    <property type="match status" value="1"/>
</dbReference>
<comment type="function">
    <text evidence="1">Catalyzes the reduction of the glycolytic intermediate dihydroxyacetone phosphate (DHAP) to sn-glycerol 3-phosphate (G3P), the key precursor for phospholipid synthesis.</text>
</comment>
<comment type="catalytic activity">
    <reaction evidence="1">
        <text>sn-glycerol 3-phosphate + NAD(+) = dihydroxyacetone phosphate + NADH + H(+)</text>
        <dbReference type="Rhea" id="RHEA:11092"/>
        <dbReference type="ChEBI" id="CHEBI:15378"/>
        <dbReference type="ChEBI" id="CHEBI:57540"/>
        <dbReference type="ChEBI" id="CHEBI:57597"/>
        <dbReference type="ChEBI" id="CHEBI:57642"/>
        <dbReference type="ChEBI" id="CHEBI:57945"/>
        <dbReference type="EC" id="1.1.1.94"/>
    </reaction>
    <physiologicalReaction direction="right-to-left" evidence="1">
        <dbReference type="Rhea" id="RHEA:11094"/>
    </physiologicalReaction>
</comment>
<comment type="catalytic activity">
    <reaction evidence="1">
        <text>sn-glycerol 3-phosphate + NADP(+) = dihydroxyacetone phosphate + NADPH + H(+)</text>
        <dbReference type="Rhea" id="RHEA:11096"/>
        <dbReference type="ChEBI" id="CHEBI:15378"/>
        <dbReference type="ChEBI" id="CHEBI:57597"/>
        <dbReference type="ChEBI" id="CHEBI:57642"/>
        <dbReference type="ChEBI" id="CHEBI:57783"/>
        <dbReference type="ChEBI" id="CHEBI:58349"/>
        <dbReference type="EC" id="1.1.1.94"/>
    </reaction>
    <physiologicalReaction direction="right-to-left" evidence="1">
        <dbReference type="Rhea" id="RHEA:11098"/>
    </physiologicalReaction>
</comment>
<comment type="pathway">
    <text evidence="1">Membrane lipid metabolism; glycerophospholipid metabolism.</text>
</comment>
<comment type="subcellular location">
    <subcellularLocation>
        <location evidence="1">Cytoplasm</location>
    </subcellularLocation>
</comment>
<comment type="similarity">
    <text evidence="1">Belongs to the NAD-dependent glycerol-3-phosphate dehydrogenase family.</text>
</comment>
<comment type="sequence caution" evidence="2">
    <conflict type="frameshift">
        <sequence resource="EMBL-CDS" id="AAO04758"/>
    </conflict>
</comment>
<accession>Q8CP63</accession>
<accession>Q8CP64</accession>